<organism>
    <name type="scientific">Salmonella paratyphi A (strain AKU_12601)</name>
    <dbReference type="NCBI Taxonomy" id="554290"/>
    <lineage>
        <taxon>Bacteria</taxon>
        <taxon>Pseudomonadati</taxon>
        <taxon>Pseudomonadota</taxon>
        <taxon>Gammaproteobacteria</taxon>
        <taxon>Enterobacterales</taxon>
        <taxon>Enterobacteriaceae</taxon>
        <taxon>Salmonella</taxon>
    </lineage>
</organism>
<accession>B5BHV4</accession>
<evidence type="ECO:0000255" key="1">
    <source>
        <dbReference type="HAMAP-Rule" id="MF_00820"/>
    </source>
</evidence>
<proteinExistence type="inferred from homology"/>
<gene>
    <name evidence="1" type="primary">dlgD</name>
    <name type="ordered locus">SSPA3286</name>
</gene>
<keyword id="KW-0963">Cytoplasm</keyword>
<keyword id="KW-0520">NAD</keyword>
<keyword id="KW-0560">Oxidoreductase</keyword>
<name>DLGD_SALPK</name>
<feature type="chain" id="PRO_1000134351" description="2,3-diketo-L-gulonate reductase">
    <location>
        <begin position="1"/>
        <end position="332"/>
    </location>
</feature>
<feature type="active site" description="Proton donor" evidence="1">
    <location>
        <position position="44"/>
    </location>
</feature>
<feature type="binding site" evidence="1">
    <location>
        <begin position="168"/>
        <end position="174"/>
    </location>
    <ligand>
        <name>NAD(+)</name>
        <dbReference type="ChEBI" id="CHEBI:57540"/>
    </ligand>
</feature>
<feature type="binding site" evidence="1">
    <location>
        <begin position="224"/>
        <end position="225"/>
    </location>
    <ligand>
        <name>NAD(+)</name>
        <dbReference type="ChEBI" id="CHEBI:57540"/>
    </ligand>
</feature>
<feature type="binding site" evidence="1">
    <location>
        <begin position="304"/>
        <end position="306"/>
    </location>
    <ligand>
        <name>NAD(+)</name>
        <dbReference type="ChEBI" id="CHEBI:57540"/>
    </ligand>
</feature>
<comment type="function">
    <text evidence="1">Catalyzes the reduction of 2,3-diketo-L-gulonate in the presence of NADH, to form 3-keto-L-gulonate.</text>
</comment>
<comment type="catalytic activity">
    <reaction evidence="1">
        <text>3-dehydro-L-gulonate + NAD(+) = 2,3-dioxo-L-gulonate + NADH + H(+)</text>
        <dbReference type="Rhea" id="RHEA:21924"/>
        <dbReference type="ChEBI" id="CHEBI:15378"/>
        <dbReference type="ChEBI" id="CHEBI:57441"/>
        <dbReference type="ChEBI" id="CHEBI:57540"/>
        <dbReference type="ChEBI" id="CHEBI:57655"/>
        <dbReference type="ChEBI" id="CHEBI:57945"/>
        <dbReference type="EC" id="1.1.1.130"/>
    </reaction>
</comment>
<comment type="catalytic activity">
    <reaction evidence="1">
        <text>3-dehydro-L-gulonate + NADP(+) = 2,3-dioxo-L-gulonate + NADPH + H(+)</text>
        <dbReference type="Rhea" id="RHEA:21928"/>
        <dbReference type="ChEBI" id="CHEBI:15378"/>
        <dbReference type="ChEBI" id="CHEBI:57441"/>
        <dbReference type="ChEBI" id="CHEBI:57655"/>
        <dbReference type="ChEBI" id="CHEBI:57783"/>
        <dbReference type="ChEBI" id="CHEBI:58349"/>
        <dbReference type="EC" id="1.1.1.130"/>
    </reaction>
</comment>
<comment type="subunit">
    <text evidence="1">Homodimer.</text>
</comment>
<comment type="subcellular location">
    <subcellularLocation>
        <location evidence="1">Cytoplasm</location>
    </subcellularLocation>
</comment>
<comment type="similarity">
    <text evidence="1">Belongs to the LDH2/MDH2 oxidoreductase family. DlgD subfamily.</text>
</comment>
<sequence>MKVTFEELKGAFYRVLRSRNIAEDTADACAEMFARTTESGVYSHGVNRFPRFIQQLDNGDIIPDAKPQRVTSLGAIEQWDAQRAIGNLTAKKMMDRAIELASDHGIGLVALRNANHWMRGGSYGWQAAEKGYIGICWTNSIAVMPPWGAKECRIGTNPLIVAIPSTPITMVDMSMSMFSYGMLEVNRLAGRELPVDGGFDDNGQLTKEPGVIEKNRRILPMGYWKGSGLSIVLDMIATLLSNGSSVAEVTQENSDEYGVSQIFIAIEVDKLIDGATRDAKLQRIMDFITTAERADDNVAIRLPGHEFTKLLDDNRRHGITVDDSVWAKIQAL</sequence>
<dbReference type="EC" id="1.1.1.130" evidence="1"/>
<dbReference type="EMBL" id="FM200053">
    <property type="protein sequence ID" value="CAR61549.1"/>
    <property type="molecule type" value="Genomic_DNA"/>
</dbReference>
<dbReference type="SMR" id="B5BHV4"/>
<dbReference type="KEGG" id="sek:SSPA3286"/>
<dbReference type="HOGENOM" id="CLU_040452_4_0_6"/>
<dbReference type="Proteomes" id="UP000001869">
    <property type="component" value="Chromosome"/>
</dbReference>
<dbReference type="GO" id="GO:0005737">
    <property type="term" value="C:cytoplasm"/>
    <property type="evidence" value="ECO:0007669"/>
    <property type="project" value="UniProtKB-SubCell"/>
</dbReference>
<dbReference type="GO" id="GO:0047559">
    <property type="term" value="F:3-dehydro-L-gulonate 2-dehydrogenase activity"/>
    <property type="evidence" value="ECO:0007669"/>
    <property type="project" value="UniProtKB-UniRule"/>
</dbReference>
<dbReference type="GO" id="GO:0070403">
    <property type="term" value="F:NAD+ binding"/>
    <property type="evidence" value="ECO:0007669"/>
    <property type="project" value="InterPro"/>
</dbReference>
<dbReference type="Gene3D" id="1.10.1530.10">
    <property type="match status" value="1"/>
</dbReference>
<dbReference type="Gene3D" id="3.30.1370.60">
    <property type="entry name" value="Hypothetical oxidoreductase yiak, domain 2"/>
    <property type="match status" value="1"/>
</dbReference>
<dbReference type="Gene3D" id="3.30.60.50">
    <property type="entry name" value="Hypothetical oxidoreductase yiak, domain 3"/>
    <property type="match status" value="1"/>
</dbReference>
<dbReference type="HAMAP" id="MF_00820">
    <property type="entry name" value="Diketo_gul_reduc"/>
    <property type="match status" value="1"/>
</dbReference>
<dbReference type="InterPro" id="IPR023689">
    <property type="entry name" value="Diketo_gul_Rdtase"/>
</dbReference>
<dbReference type="InterPro" id="IPR043144">
    <property type="entry name" value="Mal/L-sulf/L-lact_DH-like_ah"/>
</dbReference>
<dbReference type="InterPro" id="IPR043143">
    <property type="entry name" value="Mal/L-sulf/L-lact_DH-like_NADP"/>
</dbReference>
<dbReference type="InterPro" id="IPR036111">
    <property type="entry name" value="Mal/L-sulfo/L-lacto_DH-like_sf"/>
</dbReference>
<dbReference type="InterPro" id="IPR003767">
    <property type="entry name" value="Malate/L-lactate_DH-like"/>
</dbReference>
<dbReference type="NCBIfam" id="NF009750">
    <property type="entry name" value="PRK13260.1"/>
    <property type="match status" value="1"/>
</dbReference>
<dbReference type="PANTHER" id="PTHR11091:SF3">
    <property type="entry name" value="2,3-DIKETO-L-GULONATE REDUCTASE"/>
    <property type="match status" value="1"/>
</dbReference>
<dbReference type="PANTHER" id="PTHR11091">
    <property type="entry name" value="OXIDOREDUCTASE-RELATED"/>
    <property type="match status" value="1"/>
</dbReference>
<dbReference type="Pfam" id="PF02615">
    <property type="entry name" value="Ldh_2"/>
    <property type="match status" value="1"/>
</dbReference>
<dbReference type="SUPFAM" id="SSF89733">
    <property type="entry name" value="L-sulfolactate dehydrogenase-like"/>
    <property type="match status" value="1"/>
</dbReference>
<reference key="1">
    <citation type="journal article" date="2009" name="BMC Genomics">
        <title>Pseudogene accumulation in the evolutionary histories of Salmonella enterica serovars Paratyphi A and Typhi.</title>
        <authorList>
            <person name="Holt K.E."/>
            <person name="Thomson N.R."/>
            <person name="Wain J."/>
            <person name="Langridge G.C."/>
            <person name="Hasan R."/>
            <person name="Bhutta Z.A."/>
            <person name="Quail M.A."/>
            <person name="Norbertczak H."/>
            <person name="Walker D."/>
            <person name="Simmonds M."/>
            <person name="White B."/>
            <person name="Bason N."/>
            <person name="Mungall K."/>
            <person name="Dougan G."/>
            <person name="Parkhill J."/>
        </authorList>
    </citation>
    <scope>NUCLEOTIDE SEQUENCE [LARGE SCALE GENOMIC DNA]</scope>
    <source>
        <strain>AKU_12601</strain>
    </source>
</reference>
<protein>
    <recommendedName>
        <fullName evidence="1">2,3-diketo-L-gulonate reductase</fullName>
        <shortName evidence="1">2,3-DKG reductase</shortName>
        <ecNumber evidence="1">1.1.1.130</ecNumber>
    </recommendedName>
    <alternativeName>
        <fullName evidence="1">3-dehydro-L-gulonate 2-dehydrogenase</fullName>
    </alternativeName>
</protein>